<comment type="function">
    <text evidence="1">Dol-P-Man:Man(5)GlcNAc(2)-PP-Dol alpha-1,3-mannosyltransferase that operates in the biosynthetic pathway of dolichol-linked oligosaccharides, the glycan precursors employed in protein asparagine (N)-glycosylation. The assembly of dolichol-linked oligosaccharides begins on the cytosolic side of the endoplasmic reticulum membrane and finishes in its lumen. The sequential addition of sugars to dolichol pyrophosphate produces dolichol-linked oligosaccharides containing fourteen sugars, including two GlcNAcs, nine mannoses and three glucoses. Once assembled, the oligosaccharide is transferred from the lipid to nascent proteins by oligosaccharyltransferases. In the lumen of the endoplasmic reticulum, adds the first dolichyl beta-D-mannosyl phosphate derived mannose in an alpha-1,3 linkage to Man(5)GlcNAc(2)-PP-dolichol to produce Man(6)GlcNAc(2)-PP-dolichol.</text>
</comment>
<comment type="catalytic activity">
    <reaction evidence="1">
        <text>an alpha-D-Man-(1-&gt;2)-alpha-D-Man-(1-&gt;2)-alpha-D-Man-(1-&gt;3)-[alpha-D-Man-(1-&gt;6)]-beta-D-Man-(1-&gt;4)-beta-D-GlcNAc-(1-&gt;4)-alpha-D-GlcNAc-diphospho-di-trans,poly-cis-dolichol + a di-trans,poly-cis-dolichyl beta-D-mannosyl phosphate = an alpha-D-Man-(1-&gt;2)-alpha-D-Man-(1-&gt;2)-alpha-D-Man-(1-&gt;3)-[alpha-D-Man-(1-&gt;3)-alpha-D-Man-(1-&gt;6)]-beta-D-Man-(1-&gt;4)-beta-D-GlcNAc-(1-&gt;4)-alpha-D-GlcNAc-diphospho-di-trans,poly-cis-dolichol + a di-trans,poly-cis-dolichyl phosphate + H(+)</text>
        <dbReference type="Rhea" id="RHEA:29527"/>
        <dbReference type="Rhea" id="RHEA-COMP:19498"/>
        <dbReference type="Rhea" id="RHEA-COMP:19501"/>
        <dbReference type="Rhea" id="RHEA-COMP:19516"/>
        <dbReference type="Rhea" id="RHEA-COMP:19517"/>
        <dbReference type="ChEBI" id="CHEBI:15378"/>
        <dbReference type="ChEBI" id="CHEBI:57683"/>
        <dbReference type="ChEBI" id="CHEBI:58211"/>
        <dbReference type="ChEBI" id="CHEBI:132515"/>
        <dbReference type="ChEBI" id="CHEBI:132516"/>
        <dbReference type="EC" id="2.4.1.258"/>
    </reaction>
    <physiologicalReaction direction="left-to-right" evidence="1">
        <dbReference type="Rhea" id="RHEA:29528"/>
    </physiologicalReaction>
</comment>
<comment type="pathway">
    <text evidence="1">Protein modification; protein glycosylation.</text>
</comment>
<comment type="subcellular location">
    <subcellularLocation>
        <location evidence="1">Endoplasmic reticulum membrane</location>
        <topology evidence="2">Multi-pass membrane protein</topology>
    </subcellularLocation>
</comment>
<comment type="similarity">
    <text evidence="3">Belongs to the glycosyltransferase ALG3 family.</text>
</comment>
<organism>
    <name type="scientific">Neosartorya fischeri (strain ATCC 1020 / DSM 3700 / CBS 544.65 / FGSC A1164 / JCM 1740 / NRRL 181 / WB 181)</name>
    <name type="common">Aspergillus fischerianus</name>
    <dbReference type="NCBI Taxonomy" id="331117"/>
    <lineage>
        <taxon>Eukaryota</taxon>
        <taxon>Fungi</taxon>
        <taxon>Dikarya</taxon>
        <taxon>Ascomycota</taxon>
        <taxon>Pezizomycotina</taxon>
        <taxon>Eurotiomycetes</taxon>
        <taxon>Eurotiomycetidae</taxon>
        <taxon>Eurotiales</taxon>
        <taxon>Aspergillaceae</taxon>
        <taxon>Aspergillus</taxon>
        <taxon>Aspergillus subgen. Fumigati</taxon>
    </lineage>
</organism>
<reference key="1">
    <citation type="journal article" date="2008" name="PLoS Genet.">
        <title>Genomic islands in the pathogenic filamentous fungus Aspergillus fumigatus.</title>
        <authorList>
            <person name="Fedorova N.D."/>
            <person name="Khaldi N."/>
            <person name="Joardar V.S."/>
            <person name="Maiti R."/>
            <person name="Amedeo P."/>
            <person name="Anderson M.J."/>
            <person name="Crabtree J."/>
            <person name="Silva J.C."/>
            <person name="Badger J.H."/>
            <person name="Albarraq A."/>
            <person name="Angiuoli S."/>
            <person name="Bussey H."/>
            <person name="Bowyer P."/>
            <person name="Cotty P.J."/>
            <person name="Dyer P.S."/>
            <person name="Egan A."/>
            <person name="Galens K."/>
            <person name="Fraser-Liggett C.M."/>
            <person name="Haas B.J."/>
            <person name="Inman J.M."/>
            <person name="Kent R."/>
            <person name="Lemieux S."/>
            <person name="Malavazi I."/>
            <person name="Orvis J."/>
            <person name="Roemer T."/>
            <person name="Ronning C.M."/>
            <person name="Sundaram J.P."/>
            <person name="Sutton G."/>
            <person name="Turner G."/>
            <person name="Venter J.C."/>
            <person name="White O.R."/>
            <person name="Whitty B.R."/>
            <person name="Youngman P."/>
            <person name="Wolfe K.H."/>
            <person name="Goldman G.H."/>
            <person name="Wortman J.R."/>
            <person name="Jiang B."/>
            <person name="Denning D.W."/>
            <person name="Nierman W.C."/>
        </authorList>
    </citation>
    <scope>NUCLEOTIDE SEQUENCE [LARGE SCALE GENOMIC DNA]</scope>
    <source>
        <strain>ATCC 1020 / DSM 3700 / CBS 544.65 / FGSC A1164 / JCM 1740 / NRRL 181 / WB 181</strain>
    </source>
</reference>
<keyword id="KW-0256">Endoplasmic reticulum</keyword>
<keyword id="KW-0328">Glycosyltransferase</keyword>
<keyword id="KW-0472">Membrane</keyword>
<keyword id="KW-1185">Reference proteome</keyword>
<keyword id="KW-0808">Transferase</keyword>
<keyword id="KW-0812">Transmembrane</keyword>
<keyword id="KW-1133">Transmembrane helix</keyword>
<evidence type="ECO:0000250" key="1">
    <source>
        <dbReference type="UniProtKB" id="P38179"/>
    </source>
</evidence>
<evidence type="ECO:0000255" key="2"/>
<evidence type="ECO:0000305" key="3"/>
<feature type="chain" id="PRO_0000350928" description="Dol-P-Man:Man(5)GlcNAc(2)-PP-Dol alpha-1,3-mannosyltransferase">
    <location>
        <begin position="1"/>
        <end position="411"/>
    </location>
</feature>
<feature type="topological domain" description="Lumenal" evidence="2">
    <location>
        <begin position="1"/>
        <end position="18"/>
    </location>
</feature>
<feature type="transmembrane region" description="Helical" evidence="2">
    <location>
        <begin position="19"/>
        <end position="39"/>
    </location>
</feature>
<feature type="topological domain" description="Cytoplasmic" evidence="2">
    <location>
        <begin position="40"/>
        <end position="69"/>
    </location>
</feature>
<feature type="transmembrane region" description="Helical" evidence="2">
    <location>
        <begin position="70"/>
        <end position="90"/>
    </location>
</feature>
<feature type="topological domain" description="Lumenal" evidence="2">
    <location>
        <begin position="91"/>
        <end position="95"/>
    </location>
</feature>
<feature type="transmembrane region" description="Helical" evidence="2">
    <location>
        <begin position="96"/>
        <end position="116"/>
    </location>
</feature>
<feature type="topological domain" description="Cytoplasmic" evidence="2">
    <location>
        <begin position="117"/>
        <end position="139"/>
    </location>
</feature>
<feature type="transmembrane region" description="Helical" evidence="2">
    <location>
        <begin position="140"/>
        <end position="160"/>
    </location>
</feature>
<feature type="topological domain" description="Lumenal" evidence="2">
    <location>
        <begin position="161"/>
        <end position="181"/>
    </location>
</feature>
<feature type="transmembrane region" description="Helical" evidence="2">
    <location>
        <begin position="182"/>
        <end position="202"/>
    </location>
</feature>
<feature type="transmembrane region" description="Helical" evidence="2">
    <location>
        <begin position="203"/>
        <end position="223"/>
    </location>
</feature>
<feature type="topological domain" description="Cytoplasmic" evidence="2">
    <location>
        <begin position="224"/>
        <end position="261"/>
    </location>
</feature>
<feature type="transmembrane region" description="Helical" evidence="2">
    <location>
        <begin position="262"/>
        <end position="282"/>
    </location>
</feature>
<feature type="topological domain" description="Lumenal" evidence="2">
    <location>
        <begin position="283"/>
        <end position="306"/>
    </location>
</feature>
<feature type="transmembrane region" description="Helical" evidence="2">
    <location>
        <begin position="307"/>
        <end position="327"/>
    </location>
</feature>
<feature type="topological domain" description="Cytoplasmic" evidence="2">
    <location>
        <begin position="328"/>
        <end position="340"/>
    </location>
</feature>
<feature type="transmembrane region" description="Helical" evidence="2">
    <location>
        <begin position="341"/>
        <end position="361"/>
    </location>
</feature>
<feature type="topological domain" description="Lumenal" evidence="2">
    <location>
        <begin position="362"/>
        <end position="375"/>
    </location>
</feature>
<feature type="transmembrane region" description="Helical" evidence="2">
    <location>
        <begin position="376"/>
        <end position="396"/>
    </location>
</feature>
<feature type="topological domain" description="Cytoplasmic" evidence="2">
    <location>
        <begin position="397"/>
        <end position="411"/>
    </location>
</feature>
<protein>
    <recommendedName>
        <fullName evidence="1">Dol-P-Man:Man(5)GlcNAc(2)-PP-Dol alpha-1,3-mannosyltransferase</fullName>
        <ecNumber evidence="1">2.4.1.258</ecNumber>
    </recommendedName>
    <alternativeName>
        <fullName>Asparagine-linked glycosylation protein 6</fullName>
    </alternativeName>
    <alternativeName>
        <fullName>Dol-P-Man-dependent alpha(1-3)-mannosyltransferase</fullName>
    </alternativeName>
    <alternativeName>
        <fullName>Dolichyl-P-Man:Man(5)GlcNAc(2)-PP-dolichyl mannosyltransferase</fullName>
    </alternativeName>
</protein>
<gene>
    <name type="primary">alg3</name>
    <name type="ORF">NFIA_075290</name>
</gene>
<sequence length="411" mass="46431">MDLKHTLRDLCMNPRHTRWVAPLLILGDAVLCALIIWKVPYTEIDWTTYMQQISLYISGERDYTLIKGSTGPLVYPAAHVYIFNILYHLTDEGRDIFLGQILFAILYLATLTVAMTCYRQAGAPPYLLVPLVLSKRLHSVFMLRLFNDGFAAYAMWVSILLFMNKKWTAGAIVWSTGVGIKMTLLLLAPAIAVVLVLSLSLGPSMQLGFLAVLIQVLFGIPFLQNNPAGYVSRAFELTRQFMFKWTVNWRFVGEELFLSRKFSLALLALHILLLGLFVATVWLKPSGSDLPSFLQRLIQRRYRTASLSKSFIMTAMLSSLAIGLLCARSLHYQFFAYLACATPFLLWQAGFHPILVYVVWVAQEWAWNTYPSTNASSLVVILSLAAQVFGVLGNSFSRKHLDQSSQKEHLQ</sequence>
<dbReference type="EC" id="2.4.1.258" evidence="1"/>
<dbReference type="EMBL" id="DS027696">
    <property type="protein sequence ID" value="EAW17600.1"/>
    <property type="molecule type" value="Genomic_DNA"/>
</dbReference>
<dbReference type="RefSeq" id="XP_001259497.1">
    <property type="nucleotide sequence ID" value="XM_001259496.1"/>
</dbReference>
<dbReference type="STRING" id="331117.A1DDZ3"/>
<dbReference type="EnsemblFungi" id="EAW17600">
    <property type="protein sequence ID" value="EAW17600"/>
    <property type="gene ID" value="NFIA_075290"/>
</dbReference>
<dbReference type="GeneID" id="4585789"/>
<dbReference type="KEGG" id="nfi:NFIA_075290"/>
<dbReference type="VEuPathDB" id="FungiDB:NFIA_075290"/>
<dbReference type="eggNOG" id="KOG2762">
    <property type="taxonomic scope" value="Eukaryota"/>
</dbReference>
<dbReference type="HOGENOM" id="CLU_035382_3_0_1"/>
<dbReference type="OMA" id="PERYGIH"/>
<dbReference type="OrthoDB" id="20028at2759"/>
<dbReference type="UniPathway" id="UPA00378"/>
<dbReference type="Proteomes" id="UP000006702">
    <property type="component" value="Unassembled WGS sequence"/>
</dbReference>
<dbReference type="GO" id="GO:0005789">
    <property type="term" value="C:endoplasmic reticulum membrane"/>
    <property type="evidence" value="ECO:0007669"/>
    <property type="project" value="UniProtKB-SubCell"/>
</dbReference>
<dbReference type="GO" id="GO:0052925">
    <property type="term" value="F:dol-P-Man:Man(5)GlcNAc(2)-PP-Dol alpha-1,3-mannosyltransferase activity"/>
    <property type="evidence" value="ECO:0007669"/>
    <property type="project" value="UniProtKB-EC"/>
</dbReference>
<dbReference type="GO" id="GO:0006488">
    <property type="term" value="P:dolichol-linked oligosaccharide biosynthetic process"/>
    <property type="evidence" value="ECO:0007669"/>
    <property type="project" value="EnsemblFungi"/>
</dbReference>
<dbReference type="InterPro" id="IPR007873">
    <property type="entry name" value="Glycosyltransferase_ALG3"/>
</dbReference>
<dbReference type="PANTHER" id="PTHR12646:SF0">
    <property type="entry name" value="DOL-P-MAN:MAN(5)GLCNAC(2)-PP-DOL ALPHA-1,3-MANNOSYLTRANSFERASE"/>
    <property type="match status" value="1"/>
</dbReference>
<dbReference type="PANTHER" id="PTHR12646">
    <property type="entry name" value="NOT56 - RELATED"/>
    <property type="match status" value="1"/>
</dbReference>
<dbReference type="Pfam" id="PF05208">
    <property type="entry name" value="ALG3"/>
    <property type="match status" value="1"/>
</dbReference>
<accession>A1DDZ3</accession>
<name>ALG3_NEOFI</name>
<proteinExistence type="inferred from homology"/>